<protein>
    <recommendedName>
        <fullName evidence="1">Large ribosomal subunit protein uL22</fullName>
    </recommendedName>
    <alternativeName>
        <fullName evidence="2">50S ribosomal protein L22</fullName>
    </alternativeName>
</protein>
<reference key="1">
    <citation type="journal article" date="2004" name="Nucleic Acids Res.">
        <title>Genome sequence of Symbiobacterium thermophilum, an uncultivable bacterium that depends on microbial commensalism.</title>
        <authorList>
            <person name="Ueda K."/>
            <person name="Yamashita A."/>
            <person name="Ishikawa J."/>
            <person name="Shimada M."/>
            <person name="Watsuji T."/>
            <person name="Morimura K."/>
            <person name="Ikeda H."/>
            <person name="Hattori M."/>
            <person name="Beppu T."/>
        </authorList>
    </citation>
    <scope>NUCLEOTIDE SEQUENCE [LARGE SCALE GENOMIC DNA]</scope>
    <source>
        <strain>DSM 24528 / JCM 14929 / IAM 14863 / T</strain>
    </source>
</reference>
<gene>
    <name evidence="1" type="primary">rplV</name>
    <name type="ordered locus">STH3070</name>
</gene>
<sequence length="113" mass="12645">MEVKASARFVRIAPRKVRVVIDLVRGKSVNEALALLKFIPKRASEPVAKVIASAAANAEHNFSLNKDNLYIAKAYVDQGPTLKRYHPRQRGQAFPILKRTSHITVVVKEKEAK</sequence>
<dbReference type="EMBL" id="AP006840">
    <property type="protein sequence ID" value="BAD42052.1"/>
    <property type="molecule type" value="Genomic_DNA"/>
</dbReference>
<dbReference type="RefSeq" id="WP_011197185.1">
    <property type="nucleotide sequence ID" value="NC_006177.1"/>
</dbReference>
<dbReference type="SMR" id="Q67JU8"/>
<dbReference type="STRING" id="292459.STH3070"/>
<dbReference type="KEGG" id="sth:STH3070"/>
<dbReference type="eggNOG" id="COG0091">
    <property type="taxonomic scope" value="Bacteria"/>
</dbReference>
<dbReference type="HOGENOM" id="CLU_083987_3_3_9"/>
<dbReference type="OrthoDB" id="9805969at2"/>
<dbReference type="Proteomes" id="UP000000417">
    <property type="component" value="Chromosome"/>
</dbReference>
<dbReference type="GO" id="GO:0022625">
    <property type="term" value="C:cytosolic large ribosomal subunit"/>
    <property type="evidence" value="ECO:0007669"/>
    <property type="project" value="TreeGrafter"/>
</dbReference>
<dbReference type="GO" id="GO:0019843">
    <property type="term" value="F:rRNA binding"/>
    <property type="evidence" value="ECO:0007669"/>
    <property type="project" value="UniProtKB-UniRule"/>
</dbReference>
<dbReference type="GO" id="GO:0003735">
    <property type="term" value="F:structural constituent of ribosome"/>
    <property type="evidence" value="ECO:0007669"/>
    <property type="project" value="InterPro"/>
</dbReference>
<dbReference type="GO" id="GO:0006412">
    <property type="term" value="P:translation"/>
    <property type="evidence" value="ECO:0007669"/>
    <property type="project" value="UniProtKB-UniRule"/>
</dbReference>
<dbReference type="CDD" id="cd00336">
    <property type="entry name" value="Ribosomal_L22"/>
    <property type="match status" value="1"/>
</dbReference>
<dbReference type="FunFam" id="3.90.470.10:FF:000011">
    <property type="entry name" value="50S ribosomal protein L22"/>
    <property type="match status" value="1"/>
</dbReference>
<dbReference type="Gene3D" id="3.90.470.10">
    <property type="entry name" value="Ribosomal protein L22/L17"/>
    <property type="match status" value="1"/>
</dbReference>
<dbReference type="HAMAP" id="MF_01331_B">
    <property type="entry name" value="Ribosomal_uL22_B"/>
    <property type="match status" value="1"/>
</dbReference>
<dbReference type="InterPro" id="IPR001063">
    <property type="entry name" value="Ribosomal_uL22"/>
</dbReference>
<dbReference type="InterPro" id="IPR005727">
    <property type="entry name" value="Ribosomal_uL22_bac/chlpt-type"/>
</dbReference>
<dbReference type="InterPro" id="IPR047867">
    <property type="entry name" value="Ribosomal_uL22_bac/org-type"/>
</dbReference>
<dbReference type="InterPro" id="IPR036394">
    <property type="entry name" value="Ribosomal_uL22_sf"/>
</dbReference>
<dbReference type="NCBIfam" id="TIGR01044">
    <property type="entry name" value="rplV_bact"/>
    <property type="match status" value="1"/>
</dbReference>
<dbReference type="PANTHER" id="PTHR13501">
    <property type="entry name" value="CHLOROPLAST 50S RIBOSOMAL PROTEIN L22-RELATED"/>
    <property type="match status" value="1"/>
</dbReference>
<dbReference type="PANTHER" id="PTHR13501:SF8">
    <property type="entry name" value="LARGE RIBOSOMAL SUBUNIT PROTEIN UL22M"/>
    <property type="match status" value="1"/>
</dbReference>
<dbReference type="Pfam" id="PF00237">
    <property type="entry name" value="Ribosomal_L22"/>
    <property type="match status" value="1"/>
</dbReference>
<dbReference type="SUPFAM" id="SSF54843">
    <property type="entry name" value="Ribosomal protein L22"/>
    <property type="match status" value="1"/>
</dbReference>
<evidence type="ECO:0000255" key="1">
    <source>
        <dbReference type="HAMAP-Rule" id="MF_01331"/>
    </source>
</evidence>
<evidence type="ECO:0000305" key="2"/>
<proteinExistence type="inferred from homology"/>
<feature type="chain" id="PRO_0000243215" description="Large ribosomal subunit protein uL22">
    <location>
        <begin position="1"/>
        <end position="113"/>
    </location>
</feature>
<organism>
    <name type="scientific">Symbiobacterium thermophilum (strain DSM 24528 / JCM 14929 / IAM 14863 / T)</name>
    <dbReference type="NCBI Taxonomy" id="292459"/>
    <lineage>
        <taxon>Bacteria</taxon>
        <taxon>Bacillati</taxon>
        <taxon>Bacillota</taxon>
        <taxon>Clostridia</taxon>
        <taxon>Eubacteriales</taxon>
        <taxon>Symbiobacteriaceae</taxon>
        <taxon>Symbiobacterium</taxon>
    </lineage>
</organism>
<comment type="function">
    <text evidence="1">This protein binds specifically to 23S rRNA; its binding is stimulated by other ribosomal proteins, e.g. L4, L17, and L20. It is important during the early stages of 50S assembly. It makes multiple contacts with different domains of the 23S rRNA in the assembled 50S subunit and ribosome (By similarity).</text>
</comment>
<comment type="function">
    <text evidence="1">The globular domain of the protein is located near the polypeptide exit tunnel on the outside of the subunit, while an extended beta-hairpin is found that lines the wall of the exit tunnel in the center of the 70S ribosome.</text>
</comment>
<comment type="subunit">
    <text evidence="1">Part of the 50S ribosomal subunit.</text>
</comment>
<comment type="similarity">
    <text evidence="1">Belongs to the universal ribosomal protein uL22 family.</text>
</comment>
<keyword id="KW-1185">Reference proteome</keyword>
<keyword id="KW-0687">Ribonucleoprotein</keyword>
<keyword id="KW-0689">Ribosomal protein</keyword>
<keyword id="KW-0694">RNA-binding</keyword>
<keyword id="KW-0699">rRNA-binding</keyword>
<name>RL22_SYMTH</name>
<accession>Q67JU8</accession>